<evidence type="ECO:0000255" key="1">
    <source>
        <dbReference type="HAMAP-Rule" id="MF_00379"/>
    </source>
</evidence>
<proteinExistence type="inferred from homology"/>
<name>MNME_CHLAB</name>
<organism>
    <name type="scientific">Chlamydia abortus (strain DSM 27085 / S26/3)</name>
    <name type="common">Chlamydophila abortus</name>
    <dbReference type="NCBI Taxonomy" id="218497"/>
    <lineage>
        <taxon>Bacteria</taxon>
        <taxon>Pseudomonadati</taxon>
        <taxon>Chlamydiota</taxon>
        <taxon>Chlamydiia</taxon>
        <taxon>Chlamydiales</taxon>
        <taxon>Chlamydiaceae</taxon>
        <taxon>Chlamydia/Chlamydophila group</taxon>
        <taxon>Chlamydia</taxon>
    </lineage>
</organism>
<feature type="chain" id="PRO_1000048813" description="tRNA modification GTPase MnmE">
    <location>
        <begin position="1"/>
        <end position="443"/>
    </location>
</feature>
<feature type="domain" description="TrmE-type G">
    <location>
        <begin position="215"/>
        <end position="364"/>
    </location>
</feature>
<feature type="binding site" evidence="1">
    <location>
        <position position="23"/>
    </location>
    <ligand>
        <name>(6S)-5-formyl-5,6,7,8-tetrahydrofolate</name>
        <dbReference type="ChEBI" id="CHEBI:57457"/>
    </ligand>
</feature>
<feature type="binding site" evidence="1">
    <location>
        <position position="82"/>
    </location>
    <ligand>
        <name>(6S)-5-formyl-5,6,7,8-tetrahydrofolate</name>
        <dbReference type="ChEBI" id="CHEBI:57457"/>
    </ligand>
</feature>
<feature type="binding site" evidence="1">
    <location>
        <position position="121"/>
    </location>
    <ligand>
        <name>(6S)-5-formyl-5,6,7,8-tetrahydrofolate</name>
        <dbReference type="ChEBI" id="CHEBI:57457"/>
    </ligand>
</feature>
<feature type="binding site" evidence="1">
    <location>
        <begin position="225"/>
        <end position="230"/>
    </location>
    <ligand>
        <name>GTP</name>
        <dbReference type="ChEBI" id="CHEBI:37565"/>
    </ligand>
</feature>
<feature type="binding site" evidence="1">
    <location>
        <position position="225"/>
    </location>
    <ligand>
        <name>K(+)</name>
        <dbReference type="ChEBI" id="CHEBI:29103"/>
    </ligand>
</feature>
<feature type="binding site" evidence="1">
    <location>
        <position position="229"/>
    </location>
    <ligand>
        <name>Mg(2+)</name>
        <dbReference type="ChEBI" id="CHEBI:18420"/>
    </ligand>
</feature>
<feature type="binding site" evidence="1">
    <location>
        <begin position="244"/>
        <end position="250"/>
    </location>
    <ligand>
        <name>GTP</name>
        <dbReference type="ChEBI" id="CHEBI:37565"/>
    </ligand>
</feature>
<feature type="binding site" evidence="1">
    <location>
        <position position="244"/>
    </location>
    <ligand>
        <name>K(+)</name>
        <dbReference type="ChEBI" id="CHEBI:29103"/>
    </ligand>
</feature>
<feature type="binding site" evidence="1">
    <location>
        <position position="246"/>
    </location>
    <ligand>
        <name>K(+)</name>
        <dbReference type="ChEBI" id="CHEBI:29103"/>
    </ligand>
</feature>
<feature type="binding site" evidence="1">
    <location>
        <position position="249"/>
    </location>
    <ligand>
        <name>K(+)</name>
        <dbReference type="ChEBI" id="CHEBI:29103"/>
    </ligand>
</feature>
<feature type="binding site" evidence="1">
    <location>
        <position position="250"/>
    </location>
    <ligand>
        <name>Mg(2+)</name>
        <dbReference type="ChEBI" id="CHEBI:18420"/>
    </ligand>
</feature>
<feature type="binding site" evidence="1">
    <location>
        <begin position="269"/>
        <end position="272"/>
    </location>
    <ligand>
        <name>GTP</name>
        <dbReference type="ChEBI" id="CHEBI:37565"/>
    </ligand>
</feature>
<feature type="binding site" evidence="1">
    <location>
        <position position="443"/>
    </location>
    <ligand>
        <name>(6S)-5-formyl-5,6,7,8-tetrahydrofolate</name>
        <dbReference type="ChEBI" id="CHEBI:57457"/>
    </ligand>
</feature>
<reference key="1">
    <citation type="journal article" date="2005" name="Genome Res.">
        <title>The Chlamydophila abortus genome sequence reveals an array of variable proteins that contribute to interspecies variation.</title>
        <authorList>
            <person name="Thomson N.R."/>
            <person name="Yeats C."/>
            <person name="Bell K."/>
            <person name="Holden M.T.G."/>
            <person name="Bentley S.D."/>
            <person name="Livingstone M."/>
            <person name="Cerdeno-Tarraga A.-M."/>
            <person name="Harris B."/>
            <person name="Doggett J."/>
            <person name="Ormond D."/>
            <person name="Mungall K."/>
            <person name="Clarke K."/>
            <person name="Feltwell T."/>
            <person name="Hance Z."/>
            <person name="Sanders M."/>
            <person name="Quail M.A."/>
            <person name="Price C."/>
            <person name="Barrell B.G."/>
            <person name="Parkhill J."/>
            <person name="Longbottom D."/>
        </authorList>
    </citation>
    <scope>NUCLEOTIDE SEQUENCE [LARGE SCALE GENOMIC DNA]</scope>
    <source>
        <strain>DSM 27085 / S26/3</strain>
    </source>
</reference>
<comment type="function">
    <text evidence="1">Exhibits a very high intrinsic GTPase hydrolysis rate. Involved in the addition of a carboxymethylaminomethyl (cmnm) group at the wobble position (U34) of certain tRNAs, forming tRNA-cmnm(5)s(2)U34.</text>
</comment>
<comment type="cofactor">
    <cofactor evidence="1">
        <name>K(+)</name>
        <dbReference type="ChEBI" id="CHEBI:29103"/>
    </cofactor>
    <text evidence="1">Binds 1 potassium ion per subunit.</text>
</comment>
<comment type="subunit">
    <text evidence="1">Homodimer. Heterotetramer of two MnmE and two MnmG subunits.</text>
</comment>
<comment type="subcellular location">
    <subcellularLocation>
        <location evidence="1">Cytoplasm</location>
    </subcellularLocation>
</comment>
<comment type="similarity">
    <text evidence="1">Belongs to the TRAFAC class TrmE-Era-EngA-EngB-Septin-like GTPase superfamily. TrmE GTPase family.</text>
</comment>
<accession>Q5L4W0</accession>
<dbReference type="EC" id="3.6.-.-" evidence="1"/>
<dbReference type="EMBL" id="CR848038">
    <property type="protein sequence ID" value="CAH64336.1"/>
    <property type="molecule type" value="Genomic_DNA"/>
</dbReference>
<dbReference type="RefSeq" id="WP_011097408.1">
    <property type="nucleotide sequence ID" value="NC_004552.2"/>
</dbReference>
<dbReference type="SMR" id="Q5L4W0"/>
<dbReference type="KEGG" id="cab:CAB897"/>
<dbReference type="eggNOG" id="COG0486">
    <property type="taxonomic scope" value="Bacteria"/>
</dbReference>
<dbReference type="HOGENOM" id="CLU_019624_4_1_0"/>
<dbReference type="OrthoDB" id="9805918at2"/>
<dbReference type="Proteomes" id="UP000001012">
    <property type="component" value="Chromosome"/>
</dbReference>
<dbReference type="GO" id="GO:0005829">
    <property type="term" value="C:cytosol"/>
    <property type="evidence" value="ECO:0007669"/>
    <property type="project" value="TreeGrafter"/>
</dbReference>
<dbReference type="GO" id="GO:0005525">
    <property type="term" value="F:GTP binding"/>
    <property type="evidence" value="ECO:0007669"/>
    <property type="project" value="UniProtKB-UniRule"/>
</dbReference>
<dbReference type="GO" id="GO:0003924">
    <property type="term" value="F:GTPase activity"/>
    <property type="evidence" value="ECO:0007669"/>
    <property type="project" value="UniProtKB-UniRule"/>
</dbReference>
<dbReference type="GO" id="GO:0046872">
    <property type="term" value="F:metal ion binding"/>
    <property type="evidence" value="ECO:0007669"/>
    <property type="project" value="UniProtKB-KW"/>
</dbReference>
<dbReference type="GO" id="GO:0030488">
    <property type="term" value="P:tRNA methylation"/>
    <property type="evidence" value="ECO:0007669"/>
    <property type="project" value="TreeGrafter"/>
</dbReference>
<dbReference type="GO" id="GO:0002098">
    <property type="term" value="P:tRNA wobble uridine modification"/>
    <property type="evidence" value="ECO:0007669"/>
    <property type="project" value="TreeGrafter"/>
</dbReference>
<dbReference type="CDD" id="cd04164">
    <property type="entry name" value="trmE"/>
    <property type="match status" value="1"/>
</dbReference>
<dbReference type="CDD" id="cd14858">
    <property type="entry name" value="TrmE_N"/>
    <property type="match status" value="1"/>
</dbReference>
<dbReference type="FunFam" id="3.30.1360.120:FF:000003">
    <property type="entry name" value="tRNA modification GTPase MnmE"/>
    <property type="match status" value="1"/>
</dbReference>
<dbReference type="FunFam" id="3.40.50.300:FF:001376">
    <property type="entry name" value="tRNA modification GTPase MnmE"/>
    <property type="match status" value="1"/>
</dbReference>
<dbReference type="Gene3D" id="3.40.50.300">
    <property type="entry name" value="P-loop containing nucleotide triphosphate hydrolases"/>
    <property type="match status" value="1"/>
</dbReference>
<dbReference type="Gene3D" id="3.30.1360.120">
    <property type="entry name" value="Probable tRNA modification gtpase trme, domain 1"/>
    <property type="match status" value="1"/>
</dbReference>
<dbReference type="Gene3D" id="1.20.120.430">
    <property type="entry name" value="tRNA modification GTPase MnmE domain 2"/>
    <property type="match status" value="1"/>
</dbReference>
<dbReference type="HAMAP" id="MF_00379">
    <property type="entry name" value="GTPase_MnmE"/>
    <property type="match status" value="1"/>
</dbReference>
<dbReference type="InterPro" id="IPR031168">
    <property type="entry name" value="G_TrmE"/>
</dbReference>
<dbReference type="InterPro" id="IPR006073">
    <property type="entry name" value="GTP-bd"/>
</dbReference>
<dbReference type="InterPro" id="IPR018948">
    <property type="entry name" value="GTP-bd_TrmE_N"/>
</dbReference>
<dbReference type="InterPro" id="IPR004520">
    <property type="entry name" value="GTPase_MnmE"/>
</dbReference>
<dbReference type="InterPro" id="IPR027368">
    <property type="entry name" value="MnmE_dom2"/>
</dbReference>
<dbReference type="InterPro" id="IPR025867">
    <property type="entry name" value="MnmE_helical"/>
</dbReference>
<dbReference type="InterPro" id="IPR027417">
    <property type="entry name" value="P-loop_NTPase"/>
</dbReference>
<dbReference type="InterPro" id="IPR005225">
    <property type="entry name" value="Small_GTP-bd"/>
</dbReference>
<dbReference type="InterPro" id="IPR027266">
    <property type="entry name" value="TrmE/GcvT_dom1"/>
</dbReference>
<dbReference type="NCBIfam" id="TIGR00450">
    <property type="entry name" value="mnmE_trmE_thdF"/>
    <property type="match status" value="1"/>
</dbReference>
<dbReference type="NCBIfam" id="TIGR00231">
    <property type="entry name" value="small_GTP"/>
    <property type="match status" value="1"/>
</dbReference>
<dbReference type="PANTHER" id="PTHR42714">
    <property type="entry name" value="TRNA MODIFICATION GTPASE GTPBP3"/>
    <property type="match status" value="1"/>
</dbReference>
<dbReference type="PANTHER" id="PTHR42714:SF2">
    <property type="entry name" value="TRNA MODIFICATION GTPASE GTPBP3, MITOCHONDRIAL"/>
    <property type="match status" value="1"/>
</dbReference>
<dbReference type="Pfam" id="PF01926">
    <property type="entry name" value="MMR_HSR1"/>
    <property type="match status" value="1"/>
</dbReference>
<dbReference type="Pfam" id="PF12631">
    <property type="entry name" value="MnmE_helical"/>
    <property type="match status" value="1"/>
</dbReference>
<dbReference type="Pfam" id="PF10396">
    <property type="entry name" value="TrmE_N"/>
    <property type="match status" value="1"/>
</dbReference>
<dbReference type="PRINTS" id="PR00326">
    <property type="entry name" value="GTP1OBG"/>
</dbReference>
<dbReference type="SUPFAM" id="SSF52540">
    <property type="entry name" value="P-loop containing nucleoside triphosphate hydrolases"/>
    <property type="match status" value="1"/>
</dbReference>
<dbReference type="PROSITE" id="PS51709">
    <property type="entry name" value="G_TRME"/>
    <property type="match status" value="1"/>
</dbReference>
<keyword id="KW-0963">Cytoplasm</keyword>
<keyword id="KW-0342">GTP-binding</keyword>
<keyword id="KW-0378">Hydrolase</keyword>
<keyword id="KW-0460">Magnesium</keyword>
<keyword id="KW-0479">Metal-binding</keyword>
<keyword id="KW-0547">Nucleotide-binding</keyword>
<keyword id="KW-0630">Potassium</keyword>
<keyword id="KW-0819">tRNA processing</keyword>
<sequence length="443" mass="48575">MIKNDTIAAIATPPGEGSIAIVRISGPEAIQITDKIFSGSVPSFSSHTAHLGTVSYNGQQIDQTLLLIMRAPRSFTGEDVVELQCHGGYFSCSQILAALIAEGARPALPGEFSQRAFLNGKIDLIQAEAIQNIIAADNLDAFHIAQNHFQGHFSKKVQQISSLIIESLAFIEVLADFPEEEQPDMQEPMNRLHEAILIIDDLIASFDQGQRLAQGTSIVLAGHPNAGKSSLLNALTNKNRAIVTDIPGTTRDILEENWMLQGKRIRLIDSAGQRETHNPIEQEGIERAIAAMEASEAILWVMDASQPPPPLPEILMRKPSLLLWNKSDLATPPHLETTLPQLAVSAKTGAGMIELKQFIQQWMQKQQLGKNGKVFLISSRHHTILQHMRTYLLSAQEGLQSQSPPEFIALELRQALQTTGNLSGSEINETILGEIFSRFCIGK</sequence>
<protein>
    <recommendedName>
        <fullName evidence="1">tRNA modification GTPase MnmE</fullName>
        <ecNumber evidence="1">3.6.-.-</ecNumber>
    </recommendedName>
</protein>
<gene>
    <name evidence="1" type="primary">mnmE</name>
    <name evidence="1" type="synonym">trmE</name>
    <name type="ordered locus">CAB897</name>
</gene>